<accession>Q73I47</accession>
<reference key="1">
    <citation type="journal article" date="2004" name="PLoS Biol.">
        <title>Phylogenomics of the reproductive parasite Wolbachia pipientis wMel: a streamlined genome overrun by mobile genetic elements.</title>
        <authorList>
            <person name="Wu M."/>
            <person name="Sun L.V."/>
            <person name="Vamathevan J.J."/>
            <person name="Riegler M."/>
            <person name="DeBoy R.T."/>
            <person name="Brownlie J.C."/>
            <person name="McGraw E.A."/>
            <person name="Martin W."/>
            <person name="Esser C."/>
            <person name="Ahmadinejad N."/>
            <person name="Wiegand C."/>
            <person name="Madupu R."/>
            <person name="Beanan M.J."/>
            <person name="Brinkac L.M."/>
            <person name="Daugherty S.C."/>
            <person name="Durkin A.S."/>
            <person name="Kolonay J.F."/>
            <person name="Nelson W.C."/>
            <person name="Mohamoud Y."/>
            <person name="Lee P."/>
            <person name="Berry K.J."/>
            <person name="Young M.B."/>
            <person name="Utterback T.R."/>
            <person name="Weidman J.F."/>
            <person name="Nierman W.C."/>
            <person name="Paulsen I.T."/>
            <person name="Nelson K.E."/>
            <person name="Tettelin H."/>
            <person name="O'Neill S.L."/>
            <person name="Eisen J.A."/>
        </authorList>
    </citation>
    <scope>NUCLEOTIDE SEQUENCE [LARGE SCALE GENOMIC DNA]</scope>
</reference>
<comment type="function">
    <text evidence="1">Nucleoside triphosphate pyrophosphatase that hydrolyzes dTTP and UTP. May have a dual role in cell division arrest and in preventing the incorporation of modified nucleotides into cellular nucleic acids.</text>
</comment>
<comment type="catalytic activity">
    <reaction evidence="1">
        <text>dTTP + H2O = dTMP + diphosphate + H(+)</text>
        <dbReference type="Rhea" id="RHEA:28534"/>
        <dbReference type="ChEBI" id="CHEBI:15377"/>
        <dbReference type="ChEBI" id="CHEBI:15378"/>
        <dbReference type="ChEBI" id="CHEBI:33019"/>
        <dbReference type="ChEBI" id="CHEBI:37568"/>
        <dbReference type="ChEBI" id="CHEBI:63528"/>
        <dbReference type="EC" id="3.6.1.9"/>
    </reaction>
</comment>
<comment type="catalytic activity">
    <reaction evidence="1">
        <text>UTP + H2O = UMP + diphosphate + H(+)</text>
        <dbReference type="Rhea" id="RHEA:29395"/>
        <dbReference type="ChEBI" id="CHEBI:15377"/>
        <dbReference type="ChEBI" id="CHEBI:15378"/>
        <dbReference type="ChEBI" id="CHEBI:33019"/>
        <dbReference type="ChEBI" id="CHEBI:46398"/>
        <dbReference type="ChEBI" id="CHEBI:57865"/>
        <dbReference type="EC" id="3.6.1.9"/>
    </reaction>
</comment>
<comment type="cofactor">
    <cofactor evidence="1">
        <name>a divalent metal cation</name>
        <dbReference type="ChEBI" id="CHEBI:60240"/>
    </cofactor>
</comment>
<comment type="subcellular location">
    <subcellularLocation>
        <location evidence="1">Cytoplasm</location>
    </subcellularLocation>
</comment>
<comment type="similarity">
    <text evidence="1">Belongs to the Maf family. YhdE subfamily.</text>
</comment>
<name>NTPPA_WOLPM</name>
<evidence type="ECO:0000255" key="1">
    <source>
        <dbReference type="HAMAP-Rule" id="MF_00528"/>
    </source>
</evidence>
<protein>
    <recommendedName>
        <fullName evidence="1">dTTP/UTP pyrophosphatase</fullName>
        <shortName evidence="1">dTTPase/UTPase</shortName>
        <ecNumber evidence="1">3.6.1.9</ecNumber>
    </recommendedName>
    <alternativeName>
        <fullName evidence="1">Nucleoside triphosphate pyrophosphatase</fullName>
    </alternativeName>
    <alternativeName>
        <fullName evidence="1">Nucleotide pyrophosphatase</fullName>
        <shortName evidence="1">Nucleotide PPase</shortName>
    </alternativeName>
</protein>
<sequence length="198" mass="22506">MTERSLNNLILASSSKRRIALLKQINIEPGLILPADIDEAPLKKELPKDYSIRMAKSKAEKIQSLNPNYFVLGVDTVVACGRRILLKAENVEQAEKCIRLLSGRRHRVYTSVCLLTPDQSKQHIRTVVTIVKFKRLSEQEIKYYLASEEWKNRAGGCNIQGLAGVFVLFLRGSYSSVIGLPLHETYCLLSNYFNFNLY</sequence>
<dbReference type="EC" id="3.6.1.9" evidence="1"/>
<dbReference type="EMBL" id="AE017196">
    <property type="protein sequence ID" value="AAS14065.1"/>
    <property type="molecule type" value="Genomic_DNA"/>
</dbReference>
<dbReference type="RefSeq" id="WP_010082554.1">
    <property type="nucleotide sequence ID" value="NZ_OX384529.1"/>
</dbReference>
<dbReference type="SMR" id="Q73I47"/>
<dbReference type="EnsemblBacteria" id="AAS14065">
    <property type="protein sequence ID" value="AAS14065"/>
    <property type="gene ID" value="WD_0333"/>
</dbReference>
<dbReference type="KEGG" id="wol:WD_0333"/>
<dbReference type="eggNOG" id="COG0424">
    <property type="taxonomic scope" value="Bacteria"/>
</dbReference>
<dbReference type="Proteomes" id="UP000008215">
    <property type="component" value="Chromosome"/>
</dbReference>
<dbReference type="GO" id="GO:0005737">
    <property type="term" value="C:cytoplasm"/>
    <property type="evidence" value="ECO:0007669"/>
    <property type="project" value="UniProtKB-SubCell"/>
</dbReference>
<dbReference type="GO" id="GO:0036218">
    <property type="term" value="F:dTTP diphosphatase activity"/>
    <property type="evidence" value="ECO:0007669"/>
    <property type="project" value="RHEA"/>
</dbReference>
<dbReference type="GO" id="GO:0036221">
    <property type="term" value="F:UTP diphosphatase activity"/>
    <property type="evidence" value="ECO:0007669"/>
    <property type="project" value="RHEA"/>
</dbReference>
<dbReference type="GO" id="GO:0009117">
    <property type="term" value="P:nucleotide metabolic process"/>
    <property type="evidence" value="ECO:0007669"/>
    <property type="project" value="UniProtKB-KW"/>
</dbReference>
<dbReference type="CDD" id="cd00555">
    <property type="entry name" value="Maf"/>
    <property type="match status" value="1"/>
</dbReference>
<dbReference type="Gene3D" id="3.90.950.10">
    <property type="match status" value="1"/>
</dbReference>
<dbReference type="HAMAP" id="MF_00528">
    <property type="entry name" value="Maf"/>
    <property type="match status" value="1"/>
</dbReference>
<dbReference type="InterPro" id="IPR029001">
    <property type="entry name" value="ITPase-like_fam"/>
</dbReference>
<dbReference type="InterPro" id="IPR003697">
    <property type="entry name" value="Maf-like"/>
</dbReference>
<dbReference type="NCBIfam" id="TIGR00172">
    <property type="entry name" value="maf"/>
    <property type="match status" value="1"/>
</dbReference>
<dbReference type="NCBIfam" id="NF010946">
    <property type="entry name" value="PRK14366.1"/>
    <property type="match status" value="1"/>
</dbReference>
<dbReference type="PANTHER" id="PTHR43213">
    <property type="entry name" value="BIFUNCTIONAL DTTP/UTP PYROPHOSPHATASE/METHYLTRANSFERASE PROTEIN-RELATED"/>
    <property type="match status" value="1"/>
</dbReference>
<dbReference type="PANTHER" id="PTHR43213:SF5">
    <property type="entry name" value="BIFUNCTIONAL DTTP_UTP PYROPHOSPHATASE_METHYLTRANSFERASE PROTEIN-RELATED"/>
    <property type="match status" value="1"/>
</dbReference>
<dbReference type="Pfam" id="PF02545">
    <property type="entry name" value="Maf"/>
    <property type="match status" value="1"/>
</dbReference>
<dbReference type="PIRSF" id="PIRSF006305">
    <property type="entry name" value="Maf"/>
    <property type="match status" value="1"/>
</dbReference>
<dbReference type="SUPFAM" id="SSF52972">
    <property type="entry name" value="ITPase-like"/>
    <property type="match status" value="1"/>
</dbReference>
<proteinExistence type="inferred from homology"/>
<feature type="chain" id="PRO_0000267463" description="dTTP/UTP pyrophosphatase">
    <location>
        <begin position="1"/>
        <end position="198"/>
    </location>
</feature>
<feature type="active site" description="Proton acceptor" evidence="1">
    <location>
        <position position="75"/>
    </location>
</feature>
<feature type="site" description="Important for substrate specificity" evidence="1">
    <location>
        <position position="17"/>
    </location>
</feature>
<feature type="site" description="Important for substrate specificity" evidence="1">
    <location>
        <position position="76"/>
    </location>
</feature>
<feature type="site" description="Important for substrate specificity" evidence="1">
    <location>
        <position position="160"/>
    </location>
</feature>
<organism>
    <name type="scientific">Wolbachia pipientis wMel</name>
    <dbReference type="NCBI Taxonomy" id="163164"/>
    <lineage>
        <taxon>Bacteria</taxon>
        <taxon>Pseudomonadati</taxon>
        <taxon>Pseudomonadota</taxon>
        <taxon>Alphaproteobacteria</taxon>
        <taxon>Rickettsiales</taxon>
        <taxon>Anaplasmataceae</taxon>
        <taxon>Wolbachieae</taxon>
        <taxon>Wolbachia</taxon>
    </lineage>
</organism>
<gene>
    <name type="ordered locus">WD_0333</name>
</gene>
<keyword id="KW-0963">Cytoplasm</keyword>
<keyword id="KW-0378">Hydrolase</keyword>
<keyword id="KW-0546">Nucleotide metabolism</keyword>